<geneLocation type="plasmid">
    <name>pCD1</name>
</geneLocation>
<feature type="chain" id="PRO_0000066369" description="Outer membrane protein YopM">
    <location>
        <begin position="1"/>
        <end position="409"/>
    </location>
</feature>
<feature type="repeat" description="LRR 1">
    <location>
        <begin position="72"/>
        <end position="91"/>
    </location>
</feature>
<feature type="repeat" description="LRR 2">
    <location>
        <begin position="92"/>
        <end position="113"/>
    </location>
</feature>
<feature type="repeat" description="LRR 3">
    <location>
        <begin position="114"/>
        <end position="131"/>
    </location>
</feature>
<feature type="repeat" description="LRR 4">
    <location>
        <begin position="132"/>
        <end position="153"/>
    </location>
</feature>
<feature type="repeat" description="LRR 5">
    <location>
        <begin position="154"/>
        <end position="173"/>
    </location>
</feature>
<feature type="repeat" description="LRR 6">
    <location>
        <begin position="174"/>
        <end position="195"/>
    </location>
</feature>
<feature type="repeat" description="LRR 7">
    <location>
        <begin position="196"/>
        <end position="215"/>
    </location>
</feature>
<feature type="repeat" description="LRR 8">
    <location>
        <begin position="216"/>
        <end position="237"/>
    </location>
</feature>
<feature type="repeat" description="LRR 9">
    <location>
        <begin position="238"/>
        <end position="257"/>
    </location>
</feature>
<feature type="repeat" description="LRR 10">
    <location>
        <begin position="258"/>
        <end position="279"/>
    </location>
</feature>
<feature type="repeat" description="LRR 11">
    <location>
        <begin position="280"/>
        <end position="297"/>
    </location>
</feature>
<feature type="repeat" description="LRR 12">
    <location>
        <begin position="298"/>
        <end position="317"/>
    </location>
</feature>
<feature type="repeat" description="LRR 13">
    <location>
        <begin position="318"/>
        <end position="339"/>
    </location>
</feature>
<feature type="repeat" description="LRR 14">
    <location>
        <begin position="340"/>
        <end position="357"/>
    </location>
</feature>
<feature type="repeat" description="LRR 15">
    <location>
        <begin position="358"/>
        <end position="379"/>
    </location>
</feature>
<feature type="binding site">
    <location>
        <position position="246"/>
    </location>
    <ligand>
        <name>Ca(2+)</name>
        <dbReference type="ChEBI" id="CHEBI:29108"/>
        <label>1</label>
    </ligand>
</feature>
<feature type="binding site">
    <location>
        <position position="266"/>
    </location>
    <ligand>
        <name>Ca(2+)</name>
        <dbReference type="ChEBI" id="CHEBI:29108"/>
        <label>1</label>
    </ligand>
</feature>
<feature type="binding site">
    <location>
        <position position="266"/>
    </location>
    <ligand>
        <name>Ca(2+)</name>
        <dbReference type="ChEBI" id="CHEBI:29108"/>
        <label>2</label>
    </ligand>
</feature>
<feature type="binding site">
    <location>
        <position position="307"/>
    </location>
    <ligand>
        <name>Ca(2+)</name>
        <dbReference type="ChEBI" id="CHEBI:29108"/>
        <label>2</label>
    </ligand>
</feature>
<feature type="binding site">
    <location>
        <position position="308"/>
    </location>
    <ligand>
        <name>Ca(2+)</name>
        <dbReference type="ChEBI" id="CHEBI:29108"/>
        <label>2</label>
    </ligand>
</feature>
<feature type="binding site">
    <location>
        <position position="326"/>
    </location>
    <ligand>
        <name>Ca(2+)</name>
        <dbReference type="ChEBI" id="CHEBI:29108"/>
        <label>1</label>
    </ligand>
</feature>
<feature type="sequence conflict" description="In Ref. 1; no nucleotide entry." evidence="2" ref="1">
    <location>
        <begin position="142"/>
        <end position="183"/>
    </location>
</feature>
<feature type="sequence conflict" description="In Ref. 5; AAS58577." evidence="2" ref="5">
    <location>
        <begin position="195"/>
        <end position="236"/>
    </location>
</feature>
<feature type="helix" evidence="4">
    <location>
        <begin position="36"/>
        <end position="48"/>
    </location>
</feature>
<feature type="strand" evidence="3">
    <location>
        <begin position="52"/>
        <end position="54"/>
    </location>
</feature>
<feature type="helix" evidence="4">
    <location>
        <begin position="58"/>
        <end position="71"/>
    </location>
</feature>
<feature type="strand" evidence="4">
    <location>
        <begin position="74"/>
        <end position="77"/>
    </location>
</feature>
<feature type="strand" evidence="4">
    <location>
        <begin position="94"/>
        <end position="97"/>
    </location>
</feature>
<feature type="strand" evidence="4">
    <location>
        <begin position="115"/>
        <end position="117"/>
    </location>
</feature>
<feature type="strand" evidence="4">
    <location>
        <begin position="135"/>
        <end position="137"/>
    </location>
</feature>
<feature type="helix" evidence="3">
    <location>
        <begin position="149"/>
        <end position="151"/>
    </location>
</feature>
<feature type="strand" evidence="4">
    <location>
        <begin position="157"/>
        <end position="159"/>
    </location>
</feature>
<feature type="strand" evidence="4">
    <location>
        <begin position="177"/>
        <end position="179"/>
    </location>
</feature>
<feature type="strand" evidence="4">
    <location>
        <begin position="199"/>
        <end position="201"/>
    </location>
</feature>
<feature type="strand" evidence="4">
    <location>
        <begin position="219"/>
        <end position="221"/>
    </location>
</feature>
<feature type="strand" evidence="4">
    <location>
        <begin position="241"/>
        <end position="243"/>
    </location>
</feature>
<feature type="strand" evidence="4">
    <location>
        <begin position="261"/>
        <end position="263"/>
    </location>
</feature>
<feature type="strand" evidence="4">
    <location>
        <begin position="281"/>
        <end position="283"/>
    </location>
</feature>
<feature type="strand" evidence="4">
    <location>
        <begin position="290"/>
        <end position="293"/>
    </location>
</feature>
<feature type="strand" evidence="4">
    <location>
        <begin position="301"/>
        <end position="303"/>
    </location>
</feature>
<feature type="strand" evidence="4">
    <location>
        <begin position="310"/>
        <end position="312"/>
    </location>
</feature>
<feature type="strand" evidence="4">
    <location>
        <begin position="321"/>
        <end position="323"/>
    </location>
</feature>
<feature type="strand" evidence="4">
    <location>
        <begin position="341"/>
        <end position="343"/>
    </location>
</feature>
<feature type="strand" evidence="4">
    <location>
        <begin position="361"/>
        <end position="363"/>
    </location>
</feature>
<feature type="strand" evidence="4">
    <location>
        <begin position="381"/>
        <end position="383"/>
    </location>
</feature>
<dbReference type="EMBL" id="AF074612">
    <property type="protein sequence ID" value="AAC69806.1"/>
    <property type="molecule type" value="Genomic_DNA"/>
</dbReference>
<dbReference type="EMBL" id="AF053946">
    <property type="protein sequence ID" value="AAC62580.1"/>
    <property type="molecule type" value="Genomic_DNA"/>
</dbReference>
<dbReference type="EMBL" id="AL117189">
    <property type="protein sequence ID" value="CAB54903.1"/>
    <property type="molecule type" value="Genomic_DNA"/>
</dbReference>
<dbReference type="EMBL" id="AE017043">
    <property type="protein sequence ID" value="AAS58577.1"/>
    <property type="molecule type" value="Genomic_DNA"/>
</dbReference>
<dbReference type="PIR" id="A33950">
    <property type="entry name" value="A33950"/>
</dbReference>
<dbReference type="PIR" id="T43599">
    <property type="entry name" value="T43599"/>
</dbReference>
<dbReference type="RefSeq" id="NP_395161.1">
    <property type="nucleotide sequence ID" value="NC_003131.1"/>
</dbReference>
<dbReference type="RefSeq" id="NP_857756.1">
    <property type="nucleotide sequence ID" value="NC_004836.1"/>
</dbReference>
<dbReference type="RefSeq" id="NP_857953.1">
    <property type="nucleotide sequence ID" value="NC_004839.1"/>
</dbReference>
<dbReference type="RefSeq" id="WP_002229779.1">
    <property type="nucleotide sequence ID" value="NZ_WUCM01000119.1"/>
</dbReference>
<dbReference type="PDB" id="1G9U">
    <property type="method" value="X-ray"/>
    <property type="resolution" value="2.35 A"/>
    <property type="chains" value="A=1-409"/>
</dbReference>
<dbReference type="PDB" id="1JL5">
    <property type="method" value="X-ray"/>
    <property type="resolution" value="2.10 A"/>
    <property type="chains" value="A=1-409"/>
</dbReference>
<dbReference type="PDBsum" id="1G9U"/>
<dbReference type="PDBsum" id="1JL5"/>
<dbReference type="SMR" id="P17778"/>
<dbReference type="IntAct" id="P17778">
    <property type="interactions" value="36"/>
</dbReference>
<dbReference type="PaxDb" id="214092-5832447"/>
<dbReference type="DNASU" id="1149317"/>
<dbReference type="EnsemblBacteria" id="AAS58577">
    <property type="protein sequence ID" value="AAS58577"/>
    <property type="gene ID" value="YP_pCD60"/>
</dbReference>
<dbReference type="KEGG" id="ype:YPCD1.26c"/>
<dbReference type="KEGG" id="ypm:YP_pCD60"/>
<dbReference type="PATRIC" id="fig|214092.21.peg.33"/>
<dbReference type="eggNOG" id="COG4886">
    <property type="taxonomic scope" value="Bacteria"/>
</dbReference>
<dbReference type="HOGENOM" id="CLU_637685_0_0_6"/>
<dbReference type="OrthoDB" id="6434659at2"/>
<dbReference type="EvolutionaryTrace" id="P17778"/>
<dbReference type="PHI-base" id="PHI:6101"/>
<dbReference type="PHI-base" id="PHI:6824"/>
<dbReference type="PHI-base" id="PHI:6830"/>
<dbReference type="Proteomes" id="UP000000815">
    <property type="component" value="Plasmid pCD1"/>
</dbReference>
<dbReference type="Proteomes" id="UP000001019">
    <property type="component" value="Plasmid pCD1"/>
</dbReference>
<dbReference type="GO" id="GO:0009279">
    <property type="term" value="C:cell outer membrane"/>
    <property type="evidence" value="ECO:0007669"/>
    <property type="project" value="UniProtKB-SubCell"/>
</dbReference>
<dbReference type="GO" id="GO:0005576">
    <property type="term" value="C:extracellular region"/>
    <property type="evidence" value="ECO:0007669"/>
    <property type="project" value="UniProtKB-SubCell"/>
</dbReference>
<dbReference type="GO" id="GO:0046872">
    <property type="term" value="F:metal ion binding"/>
    <property type="evidence" value="ECO:0007669"/>
    <property type="project" value="UniProtKB-KW"/>
</dbReference>
<dbReference type="DisProt" id="DP01639"/>
<dbReference type="Gene3D" id="3.80.10.10">
    <property type="entry name" value="Ribonuclease Inhibitor"/>
    <property type="match status" value="1"/>
</dbReference>
<dbReference type="InterPro" id="IPR001611">
    <property type="entry name" value="Leu-rich_rpt"/>
</dbReference>
<dbReference type="InterPro" id="IPR051071">
    <property type="entry name" value="LRR-bact_E3_ubiq_ligases"/>
</dbReference>
<dbReference type="InterPro" id="IPR032675">
    <property type="entry name" value="LRR_dom_sf"/>
</dbReference>
<dbReference type="InterPro" id="IPR032674">
    <property type="entry name" value="LRR_E3_ligase_N"/>
</dbReference>
<dbReference type="PANTHER" id="PTHR47114">
    <property type="match status" value="1"/>
</dbReference>
<dbReference type="PANTHER" id="PTHR47114:SF2">
    <property type="entry name" value="OLIGODENDROCYTE-MYELIN GLYCOPROTEIN"/>
    <property type="match status" value="1"/>
</dbReference>
<dbReference type="Pfam" id="PF00560">
    <property type="entry name" value="LRR_1"/>
    <property type="match status" value="1"/>
</dbReference>
<dbReference type="Pfam" id="PF12468">
    <property type="entry name" value="LRR_TTSS"/>
    <property type="match status" value="1"/>
</dbReference>
<dbReference type="SMART" id="SM00364">
    <property type="entry name" value="LRR_BAC"/>
    <property type="match status" value="14"/>
</dbReference>
<dbReference type="SUPFAM" id="SSF52058">
    <property type="entry name" value="L domain-like"/>
    <property type="match status" value="1"/>
</dbReference>
<dbReference type="PROSITE" id="PS51450">
    <property type="entry name" value="LRR"/>
    <property type="match status" value="11"/>
</dbReference>
<organism>
    <name type="scientific">Yersinia pestis</name>
    <dbReference type="NCBI Taxonomy" id="632"/>
    <lineage>
        <taxon>Bacteria</taxon>
        <taxon>Pseudomonadati</taxon>
        <taxon>Pseudomonadota</taxon>
        <taxon>Gammaproteobacteria</taxon>
        <taxon>Enterobacterales</taxon>
        <taxon>Yersiniaceae</taxon>
        <taxon>Yersinia</taxon>
    </lineage>
</organism>
<keyword id="KW-0002">3D-structure</keyword>
<keyword id="KW-0106">Calcium</keyword>
<keyword id="KW-0998">Cell outer membrane</keyword>
<keyword id="KW-0433">Leucine-rich repeat</keyword>
<keyword id="KW-0472">Membrane</keyword>
<keyword id="KW-0479">Metal-binding</keyword>
<keyword id="KW-0614">Plasmid</keyword>
<keyword id="KW-1185">Reference proteome</keyword>
<keyword id="KW-0677">Repeat</keyword>
<keyword id="KW-0964">Secreted</keyword>
<protein>
    <recommendedName>
        <fullName>Outer membrane protein YopM</fullName>
    </recommendedName>
</protein>
<gene>
    <name type="primary">yopM</name>
    <name type="synonym">yop48</name>
    <name type="ordered locus">YPCD1.26c</name>
    <name type="ordered locus">y5054</name>
    <name type="ordered locus">y0059</name>
    <name type="ordered locus">YP_pCD60</name>
</gene>
<evidence type="ECO:0000250" key="1"/>
<evidence type="ECO:0000305" key="2"/>
<evidence type="ECO:0007829" key="3">
    <source>
        <dbReference type="PDB" id="1G9U"/>
    </source>
</evidence>
<evidence type="ECO:0007829" key="4">
    <source>
        <dbReference type="PDB" id="1JL5"/>
    </source>
</evidence>
<reference key="1">
    <citation type="journal article" date="1989" name="J. Bacteriol.">
        <title>The yopM gene of Yersinia pestis encodes a released protein having homology with the human platelet surface protein GPIb alpha.</title>
        <authorList>
            <person name="Leung K.Y."/>
            <person name="Straley S.C."/>
        </authorList>
    </citation>
    <scope>NUCLEOTIDE SEQUENCE [GENOMIC DNA]</scope>
    <source>
        <strain>KIM5 / Biovar Mediaevalis</strain>
    </source>
</reference>
<reference key="2">
    <citation type="journal article" date="1998" name="Infect. Immun.">
        <title>DNA sequencing and analysis of the low-Ca2+-response plasmid pCD1 of Yersinia pestis KIM5.</title>
        <authorList>
            <person name="Perry R.D."/>
            <person name="Straley S.C."/>
            <person name="Fetherston J.D."/>
            <person name="Rose D.J."/>
            <person name="Gregor J."/>
            <person name="Blattner F.R."/>
        </authorList>
    </citation>
    <scope>NUCLEOTIDE SEQUENCE [GENOMIC DNA]</scope>
    <source>
        <strain>KIM5 / Biovar Mediaevalis</strain>
    </source>
</reference>
<reference key="3">
    <citation type="journal article" date="1998" name="J. Bacteriol.">
        <title>Structural organization of virulence-associated plasmids of Yersinia pestis.</title>
        <authorList>
            <person name="Hu P."/>
            <person name="Elliott J."/>
            <person name="McCready P."/>
            <person name="Skowronski E."/>
            <person name="Garnes J."/>
            <person name="Kobayashi A."/>
            <person name="Brubaker R.R."/>
            <person name="Garcia E."/>
        </authorList>
    </citation>
    <scope>NUCLEOTIDE SEQUENCE [GENOMIC DNA]</scope>
    <source>
        <strain>KIM5 / Biovar Mediaevalis</strain>
    </source>
</reference>
<reference key="4">
    <citation type="journal article" date="2001" name="Nature">
        <title>Genome sequence of Yersinia pestis, the causative agent of plague.</title>
        <authorList>
            <person name="Parkhill J."/>
            <person name="Wren B.W."/>
            <person name="Thomson N.R."/>
            <person name="Titball R.W."/>
            <person name="Holden M.T.G."/>
            <person name="Prentice M.B."/>
            <person name="Sebaihia M."/>
            <person name="James K.D."/>
            <person name="Churcher C.M."/>
            <person name="Mungall K.L."/>
            <person name="Baker S."/>
            <person name="Basham D."/>
            <person name="Bentley S.D."/>
            <person name="Brooks K."/>
            <person name="Cerdeno-Tarraga A.-M."/>
            <person name="Chillingworth T."/>
            <person name="Cronin A."/>
            <person name="Davies R.M."/>
            <person name="Davis P."/>
            <person name="Dougan G."/>
            <person name="Feltwell T."/>
            <person name="Hamlin N."/>
            <person name="Holroyd S."/>
            <person name="Jagels K."/>
            <person name="Karlyshev A.V."/>
            <person name="Leather S."/>
            <person name="Moule S."/>
            <person name="Oyston P.C.F."/>
            <person name="Quail M.A."/>
            <person name="Rutherford K.M."/>
            <person name="Simmonds M."/>
            <person name="Skelton J."/>
            <person name="Stevens K."/>
            <person name="Whitehead S."/>
            <person name="Barrell B.G."/>
        </authorList>
    </citation>
    <scope>NUCLEOTIDE SEQUENCE [LARGE SCALE GENOMIC DNA]</scope>
    <source>
        <strain>CO-92 / Biovar Orientalis</strain>
    </source>
</reference>
<reference key="5">
    <citation type="journal article" date="2004" name="DNA Res.">
        <title>Complete genome sequence of Yersinia pestis strain 91001, an isolate avirulent to humans.</title>
        <authorList>
            <person name="Song Y."/>
            <person name="Tong Z."/>
            <person name="Wang J."/>
            <person name="Wang L."/>
            <person name="Guo Z."/>
            <person name="Han Y."/>
            <person name="Zhang J."/>
            <person name="Pei D."/>
            <person name="Zhou D."/>
            <person name="Qin H."/>
            <person name="Pang X."/>
            <person name="Han Y."/>
            <person name="Zhai J."/>
            <person name="Li M."/>
            <person name="Cui B."/>
            <person name="Qi Z."/>
            <person name="Jin L."/>
            <person name="Dai R."/>
            <person name="Chen F."/>
            <person name="Li S."/>
            <person name="Ye C."/>
            <person name="Du Z."/>
            <person name="Lin W."/>
            <person name="Wang J."/>
            <person name="Yu J."/>
            <person name="Yang H."/>
            <person name="Wang J."/>
            <person name="Huang P."/>
            <person name="Yang R."/>
        </authorList>
    </citation>
    <scope>NUCLEOTIDE SEQUENCE [LARGE SCALE GENOMIC DNA]</scope>
    <source>
        <strain>91001 / Biovar Mediaevalis</strain>
    </source>
</reference>
<reference key="6">
    <citation type="journal article" date="2001" name="J. Mol. Biol.">
        <title>Unusual molecular architecture of the Yersinia pestis cytotoxin YopM: a leucine-rich repeat protein with the shortest repeating unit.</title>
        <authorList>
            <person name="Evdokimov A.G."/>
            <person name="Anderson D.E."/>
            <person name="Routzahn K.M."/>
            <person name="Waugh D.S."/>
        </authorList>
    </citation>
    <scope>X-RAY CRYSTALLOGRAPHY (2.1 ANGSTROMS) OF 1-386</scope>
    <scope>DOMAINS LEUCINE-RICH REPEATS</scope>
</reference>
<comment type="function">
    <text evidence="1">Effector proteins function to alter host cell physiology and promote bacterial survival in host tissues.</text>
</comment>
<comment type="subunit">
    <text>Homotetramer forming a hollow cylinder with an inner diameter of approximately 35 angstroms.</text>
</comment>
<comment type="subcellular location">
    <subcellularLocation>
        <location>Cell outer membrane</location>
    </subcellularLocation>
    <subcellularLocation>
        <location>Secreted</location>
    </subcellularLocation>
</comment>
<comment type="similarity">
    <text evidence="2">Belongs to the LRR-containing bacterial E3 ligase family.</text>
</comment>
<sequence length="409" mass="46203">MFINPRNVSNTFLQEPLRHSSNLTEMPVEAENVKSKTEYYNAWSEWERNAPPGNGEQREMAVSRLRDCLDRQAHELELNNLGLSSLPELPPHLESLVASCNSLTELPELPQSLKSLLVDNNNLKALSDLPPLLEYLGVSNNQLEKLPELQNSSFLKIIDVDNNSLKKLPDLPPSLEFIAAGNNQLEELPELQNLPFLTAIYADNNSLKKLPDLPLSLESIVAGNNILEELPELQNLPFLTTIYADNNLLKTLPDLPPSLEALNVRDNYLTDLPELPQSLTFLDVSENIFSGLSELPPNLYYLNASSNEIRSLCDLPPSLEELNVSNNKLIELPALPPRLERLIASFNHLAEVPELPQNLKQLHVEYNPLREFPDIPESVEDLRMNSERVVDPYEFAHETTDKLEDDVFE</sequence>
<proteinExistence type="evidence at protein level"/>
<accession>P17778</accession>
<accession>O68701</accession>
<name>YOPM_YERPE</name>